<dbReference type="EC" id="3.6.4.12" evidence="1"/>
<dbReference type="EC" id="3.6.4.13" evidence="1"/>
<dbReference type="EMBL" id="AE014298">
    <property type="protein sequence ID" value="AAF48115.2"/>
    <property type="molecule type" value="Genomic_DNA"/>
</dbReference>
<dbReference type="EMBL" id="AY061379">
    <property type="protein sequence ID" value="AAL28927.1"/>
    <property type="molecule type" value="mRNA"/>
</dbReference>
<dbReference type="RefSeq" id="NP_001285145.1">
    <property type="nucleotide sequence ID" value="NM_001298216.1"/>
</dbReference>
<dbReference type="RefSeq" id="NP_572767.1">
    <property type="nucleotide sequence ID" value="NM_132539.3"/>
</dbReference>
<dbReference type="SMR" id="Q9VYS3"/>
<dbReference type="BioGRID" id="58558">
    <property type="interactions" value="9"/>
</dbReference>
<dbReference type="FunCoup" id="Q9VYS3">
    <property type="interactions" value="2536"/>
</dbReference>
<dbReference type="IntAct" id="Q9VYS3">
    <property type="interactions" value="30"/>
</dbReference>
<dbReference type="STRING" id="7227.FBpp0073433"/>
<dbReference type="GlyGen" id="Q9VYS3">
    <property type="glycosylation" value="1 site"/>
</dbReference>
<dbReference type="PaxDb" id="7227-FBpp0073433"/>
<dbReference type="DNASU" id="32153"/>
<dbReference type="EnsemblMetazoa" id="FBtr0073596">
    <property type="protein sequence ID" value="FBpp0073433"/>
    <property type="gene ID" value="FBgn0030354"/>
</dbReference>
<dbReference type="EnsemblMetazoa" id="FBtr0342744">
    <property type="protein sequence ID" value="FBpp0309612"/>
    <property type="gene ID" value="FBgn0030354"/>
</dbReference>
<dbReference type="GeneID" id="32153"/>
<dbReference type="KEGG" id="dme:Dmel_CG1559"/>
<dbReference type="UCSC" id="CG1559-RA">
    <property type="organism name" value="d. melanogaster"/>
</dbReference>
<dbReference type="AGR" id="FB:FBgn0030354"/>
<dbReference type="CTD" id="5976"/>
<dbReference type="FlyBase" id="FBgn0030354">
    <property type="gene designation" value="Upf1"/>
</dbReference>
<dbReference type="VEuPathDB" id="VectorBase:FBgn0030354"/>
<dbReference type="eggNOG" id="KOG1802">
    <property type="taxonomic scope" value="Eukaryota"/>
</dbReference>
<dbReference type="HOGENOM" id="CLU_001666_4_3_1"/>
<dbReference type="InParanoid" id="Q9VYS3"/>
<dbReference type="OMA" id="QYMQMNG"/>
<dbReference type="OrthoDB" id="6513042at2759"/>
<dbReference type="PhylomeDB" id="Q9VYS3"/>
<dbReference type="Reactome" id="R-DME-400206">
    <property type="pathway name" value="Regulation of lipid metabolism by PPARalpha"/>
</dbReference>
<dbReference type="Reactome" id="R-DME-9707564">
    <property type="pathway name" value="Cytoprotection by HMOX1"/>
</dbReference>
<dbReference type="Reactome" id="R-DME-975956">
    <property type="pathway name" value="Nonsense Mediated Decay (NMD) independent of the Exon Junction Complex (EJC)"/>
</dbReference>
<dbReference type="Reactome" id="R-DME-975957">
    <property type="pathway name" value="Nonsense Mediated Decay (NMD) enhanced by the Exon Junction Complex (EJC)"/>
</dbReference>
<dbReference type="SignaLink" id="Q9VYS3"/>
<dbReference type="BioGRID-ORCS" id="32153">
    <property type="hits" value="1 hit in 1 CRISPR screen"/>
</dbReference>
<dbReference type="GenomeRNAi" id="32153"/>
<dbReference type="PRO" id="PR:Q9VYS3"/>
<dbReference type="Proteomes" id="UP000000803">
    <property type="component" value="Chromosome X"/>
</dbReference>
<dbReference type="Bgee" id="FBgn0030354">
    <property type="expression patterns" value="Expressed in intestinal stem cell (Drosophila) in digestive tract and 135 other cell types or tissues"/>
</dbReference>
<dbReference type="ExpressionAtlas" id="Q9VYS3">
    <property type="expression patterns" value="baseline and differential"/>
</dbReference>
<dbReference type="GO" id="GO:0005737">
    <property type="term" value="C:cytoplasm"/>
    <property type="evidence" value="ECO:0000318"/>
    <property type="project" value="GO_Central"/>
</dbReference>
<dbReference type="GO" id="GO:0071598">
    <property type="term" value="C:neuronal ribonucleoprotein granule"/>
    <property type="evidence" value="ECO:0000314"/>
    <property type="project" value="UniProtKB"/>
</dbReference>
<dbReference type="GO" id="GO:0005524">
    <property type="term" value="F:ATP binding"/>
    <property type="evidence" value="ECO:0007669"/>
    <property type="project" value="UniProtKB-KW"/>
</dbReference>
<dbReference type="GO" id="GO:0016887">
    <property type="term" value="F:ATP hydrolysis activity"/>
    <property type="evidence" value="ECO:0000250"/>
    <property type="project" value="UniProtKB"/>
</dbReference>
<dbReference type="GO" id="GO:0003677">
    <property type="term" value="F:DNA binding"/>
    <property type="evidence" value="ECO:0007669"/>
    <property type="project" value="InterPro"/>
</dbReference>
<dbReference type="GO" id="GO:0036121">
    <property type="term" value="F:double-stranded DNA helicase activity"/>
    <property type="evidence" value="ECO:0000250"/>
    <property type="project" value="UniProtKB"/>
</dbReference>
<dbReference type="GO" id="GO:0003723">
    <property type="term" value="F:RNA binding"/>
    <property type="evidence" value="ECO:0000318"/>
    <property type="project" value="GO_Central"/>
</dbReference>
<dbReference type="GO" id="GO:0003724">
    <property type="term" value="F:RNA helicase activity"/>
    <property type="evidence" value="ECO:0000318"/>
    <property type="project" value="GO_Central"/>
</dbReference>
<dbReference type="GO" id="GO:0008270">
    <property type="term" value="F:zinc ion binding"/>
    <property type="evidence" value="ECO:0007669"/>
    <property type="project" value="UniProtKB-KW"/>
</dbReference>
<dbReference type="GO" id="GO:0071456">
    <property type="term" value="P:cellular response to hypoxia"/>
    <property type="evidence" value="ECO:0000315"/>
    <property type="project" value="FlyBase"/>
</dbReference>
<dbReference type="GO" id="GO:0000184">
    <property type="term" value="P:nuclear-transcribed mRNA catabolic process, nonsense-mediated decay"/>
    <property type="evidence" value="ECO:0000315"/>
    <property type="project" value="FlyBase"/>
</dbReference>
<dbReference type="GO" id="GO:2000624">
    <property type="term" value="P:positive regulation of nuclear-transcribed mRNA catabolic process, nonsense-mediated decay"/>
    <property type="evidence" value="ECO:0000315"/>
    <property type="project" value="FlyBase"/>
</dbReference>
<dbReference type="CDD" id="cd21407">
    <property type="entry name" value="1B_UPF1-like"/>
    <property type="match status" value="1"/>
</dbReference>
<dbReference type="CDD" id="cd18039">
    <property type="entry name" value="DEXXQc_UPF1"/>
    <property type="match status" value="1"/>
</dbReference>
<dbReference type="CDD" id="cd18808">
    <property type="entry name" value="SF1_C_Upf1"/>
    <property type="match status" value="1"/>
</dbReference>
<dbReference type="CDD" id="cd21400">
    <property type="entry name" value="ZBD_UPF1-like"/>
    <property type="match status" value="1"/>
</dbReference>
<dbReference type="FunFam" id="2.40.30.230:FF:000001">
    <property type="entry name" value="Regulator of nonsense transcripts 1"/>
    <property type="match status" value="1"/>
</dbReference>
<dbReference type="FunFam" id="3.40.50.300:FF:000097">
    <property type="entry name" value="Regulator of nonsense transcripts 1"/>
    <property type="match status" value="1"/>
</dbReference>
<dbReference type="Gene3D" id="2.40.30.230">
    <property type="match status" value="1"/>
</dbReference>
<dbReference type="Gene3D" id="6.10.140.1240">
    <property type="match status" value="1"/>
</dbReference>
<dbReference type="Gene3D" id="3.40.50.300">
    <property type="entry name" value="P-loop containing nucleotide triphosphate hydrolases"/>
    <property type="match status" value="2"/>
</dbReference>
<dbReference type="InterPro" id="IPR045055">
    <property type="entry name" value="DNA2/NAM7-like"/>
</dbReference>
<dbReference type="InterPro" id="IPR041679">
    <property type="entry name" value="DNA2/NAM7-like_C"/>
</dbReference>
<dbReference type="InterPro" id="IPR041677">
    <property type="entry name" value="DNA2/NAM7_AAA_11"/>
</dbReference>
<dbReference type="InterPro" id="IPR006935">
    <property type="entry name" value="Helicase/UvrB_N"/>
</dbReference>
<dbReference type="InterPro" id="IPR027417">
    <property type="entry name" value="P-loop_NTPase"/>
</dbReference>
<dbReference type="InterPro" id="IPR047187">
    <property type="entry name" value="SF1_C_Upf1"/>
</dbReference>
<dbReference type="InterPro" id="IPR040812">
    <property type="entry name" value="UPF1_1B_dom"/>
</dbReference>
<dbReference type="InterPro" id="IPR018999">
    <property type="entry name" value="UPF1_CH/ZBD"/>
</dbReference>
<dbReference type="PANTHER" id="PTHR10887">
    <property type="entry name" value="DNA2/NAM7 HELICASE FAMILY"/>
    <property type="match status" value="1"/>
</dbReference>
<dbReference type="PANTHER" id="PTHR10887:SF364">
    <property type="entry name" value="REGULATOR OF NONSENSE TRANSCRIPTS 1"/>
    <property type="match status" value="1"/>
</dbReference>
<dbReference type="Pfam" id="PF13086">
    <property type="entry name" value="AAA_11"/>
    <property type="match status" value="1"/>
</dbReference>
<dbReference type="Pfam" id="PF13087">
    <property type="entry name" value="AAA_12"/>
    <property type="match status" value="1"/>
</dbReference>
<dbReference type="Pfam" id="PF04851">
    <property type="entry name" value="ResIII"/>
    <property type="match status" value="1"/>
</dbReference>
<dbReference type="Pfam" id="PF18141">
    <property type="entry name" value="UPF1_1B_dom"/>
    <property type="match status" value="1"/>
</dbReference>
<dbReference type="Pfam" id="PF09416">
    <property type="entry name" value="UPF1_Zn_bind"/>
    <property type="match status" value="1"/>
</dbReference>
<dbReference type="SUPFAM" id="SSF52540">
    <property type="entry name" value="P-loop containing nucleoside triphosphate hydrolases"/>
    <property type="match status" value="1"/>
</dbReference>
<dbReference type="PROSITE" id="PS51997">
    <property type="entry name" value="UPF1_CH_RICH"/>
    <property type="match status" value="1"/>
</dbReference>
<gene>
    <name type="primary">Upf1</name>
    <name type="ORF">CG1559</name>
</gene>
<sequence length="1180" mass="129913">MSVDTYAPSSALSFLDMDDNELLPGADTQPTQYDYRDFTMPSTSQSQTQNDQLEIAQRCSAGDSHPRLASITNDLADLQFEEEDDEPGSSYVKELPPHACKYCGIHDPATVVMCNNCRKWFCNGRGSTSGSHIINHLVRAKHREVTLHGEGPLGETILECYSCGVRNVFVLGFIPAKADSVVVLLCRQPCAAQNSLKDMNWDQEQWKPLIADRCFLAWLVKQPSEQGQLRARQISAAQINKLEELWKENIEATFQDLEKPGIDSEPAHVLLRYEDGYQYEKTFGPLVRLEAEYDQKLKESATQENIEVRWDVGLNKKTIAYFTLAKTDSDMKLMHGDELRLHYVGELYNPWSEIGHVIKVPDNFGDDVGLELKSSTNAPVKCTSNFTVDFIWKCTSFDRMTRALCKFAIDRNSVSNFIYSRLLGHGRADSNDEVLFRGPQPKLFSAPHLPDLNRSQVYAVKHALQRPLSLIQGPPGTGKTVTSATIVYQLVKLHGGTVLVCAPSNTAVDQLTEKIHRTNLKVVRVCAKSREAIDSPVSFLALHNQIRNMETNSELKKLQQLKDETGELSSADEKRYRNLKRAAENQLLEAADVICCTCVGAGDGRLSRVKFTSILIDESMQSTEPECMVPVVLGAKQLILVGDHCQLGPVVMCKKAARAGLSQSLFERLVVLGIRPFRLEVQYRMHPELSQFPSNFFYEGSLQNGVCAEDRRLKLDFPWPQPERPMFFLVTQGQEEIAGSGTSFLNRTEAANVEKITTRFLKAGIKPEQIGIITPYEGQRAYLVQYMQYQGSLHSRLYQEIEIASVDAFQGREKDIIIMSCVRSNERQGIGFLNDPRRLNVALTRAKFGIIIVGNPKVLAKQQLWNHLLNFYKDRKVLVEGSLNNLKESLIHFQKPKKLVNSMNIGAHFMSTIIADAKEVMVPGSIYDRSGGYGQGRQMVGQSMNGGQYGGSGGGPYGNSPLGYGTPSSNSMVGFGLGNGGNGAAGGNNNFGGAGPSWAAAHLHHDSIGYISNEHGAAALGNMPVPVGMFMNMSNIPPRFYNQHQQAIMAVKQNRAIQQQTGNFSPGNSGPGVTGVGVGRSATPGGNKKTNKLGKSRVTGGGTGGAPLTQGSSVCNAAPYSQHPMPLSLQMTQPSGFALSQQPELSQDFGQISQMDGLLSQDVAFNASGERSLNQFSQPY</sequence>
<accession>Q9VYS3</accession>
<accession>Q95RG9</accession>
<organism>
    <name type="scientific">Drosophila melanogaster</name>
    <name type="common">Fruit fly</name>
    <dbReference type="NCBI Taxonomy" id="7227"/>
    <lineage>
        <taxon>Eukaryota</taxon>
        <taxon>Metazoa</taxon>
        <taxon>Ecdysozoa</taxon>
        <taxon>Arthropoda</taxon>
        <taxon>Hexapoda</taxon>
        <taxon>Insecta</taxon>
        <taxon>Pterygota</taxon>
        <taxon>Neoptera</taxon>
        <taxon>Endopterygota</taxon>
        <taxon>Diptera</taxon>
        <taxon>Brachycera</taxon>
        <taxon>Muscomorpha</taxon>
        <taxon>Ephydroidea</taxon>
        <taxon>Drosophilidae</taxon>
        <taxon>Drosophila</taxon>
        <taxon>Sophophora</taxon>
    </lineage>
</organism>
<evidence type="ECO:0000250" key="1">
    <source>
        <dbReference type="UniProtKB" id="Q92900"/>
    </source>
</evidence>
<evidence type="ECO:0000255" key="2">
    <source>
        <dbReference type="PROSITE-ProRule" id="PRU00499"/>
    </source>
</evidence>
<evidence type="ECO:0000255" key="3">
    <source>
        <dbReference type="PROSITE-ProRule" id="PRU01341"/>
    </source>
</evidence>
<evidence type="ECO:0000256" key="4">
    <source>
        <dbReference type="SAM" id="MobiDB-lite"/>
    </source>
</evidence>
<evidence type="ECO:0000269" key="5">
    <source>
    </source>
</evidence>
<evidence type="ECO:0000269" key="6">
    <source>
    </source>
</evidence>
<evidence type="ECO:0000269" key="7">
    <source>
    </source>
</evidence>
<evidence type="ECO:0000305" key="8"/>
<evidence type="ECO:0000305" key="9">
    <source>
    </source>
</evidence>
<evidence type="ECO:0000305" key="10">
    <source>
    </source>
</evidence>
<feature type="chain" id="PRO_0000080720" description="Regulator of nonsense transcripts 1 homolog">
    <location>
        <begin position="1"/>
        <end position="1180"/>
    </location>
</feature>
<feature type="domain" description="Upf1 CH-rich" evidence="3">
    <location>
        <begin position="92"/>
        <end position="249"/>
    </location>
</feature>
<feature type="region of interest" description="Disordered" evidence="4">
    <location>
        <begin position="21"/>
        <end position="51"/>
    </location>
</feature>
<feature type="region of interest" description="C3H" evidence="3">
    <location>
        <begin position="100"/>
        <end position="132"/>
    </location>
</feature>
<feature type="region of interest" description="CC/SHH/C" evidence="3">
    <location>
        <begin position="114"/>
        <end position="142"/>
    </location>
</feature>
<feature type="region of interest" description="C4" evidence="3">
    <location>
        <begin position="160"/>
        <end position="190"/>
    </location>
</feature>
<feature type="region of interest" description="Disordered" evidence="4">
    <location>
        <begin position="1062"/>
        <end position="1110"/>
    </location>
</feature>
<feature type="compositionally biased region" description="Polar residues" evidence="4">
    <location>
        <begin position="40"/>
        <end position="51"/>
    </location>
</feature>
<feature type="compositionally biased region" description="Gly residues" evidence="4">
    <location>
        <begin position="1069"/>
        <end position="1078"/>
    </location>
</feature>
<feature type="binding site" evidence="3">
    <location>
        <position position="100"/>
    </location>
    <ligand>
        <name>Zn(2+)</name>
        <dbReference type="ChEBI" id="CHEBI:29105"/>
        <label>1</label>
    </ligand>
</feature>
<feature type="binding site" evidence="3">
    <location>
        <position position="103"/>
    </location>
    <ligand>
        <name>Zn(2+)</name>
        <dbReference type="ChEBI" id="CHEBI:29105"/>
        <label>1</label>
    </ligand>
</feature>
<feature type="binding site" evidence="3">
    <location>
        <position position="114"/>
    </location>
    <ligand>
        <name>Zn(2+)</name>
        <dbReference type="ChEBI" id="CHEBI:29105"/>
        <label>2</label>
    </ligand>
</feature>
<feature type="binding site" evidence="3">
    <location>
        <position position="117"/>
    </location>
    <ligand>
        <name>Zn(2+)</name>
        <dbReference type="ChEBI" id="CHEBI:29105"/>
        <label>2</label>
    </ligand>
</feature>
<feature type="binding site" evidence="3">
    <location>
        <position position="122"/>
    </location>
    <ligand>
        <name>Zn(2+)</name>
        <dbReference type="ChEBI" id="CHEBI:29105"/>
        <label>1</label>
    </ligand>
</feature>
<feature type="binding site" evidence="3">
    <location>
        <position position="132"/>
    </location>
    <ligand>
        <name>Zn(2+)</name>
        <dbReference type="ChEBI" id="CHEBI:29105"/>
        <label>1</label>
    </ligand>
</feature>
<feature type="binding site" evidence="3">
    <location>
        <position position="136"/>
    </location>
    <ligand>
        <name>Zn(2+)</name>
        <dbReference type="ChEBI" id="CHEBI:29105"/>
        <label>2</label>
    </ligand>
</feature>
<feature type="binding site" evidence="3">
    <location>
        <position position="142"/>
    </location>
    <ligand>
        <name>Zn(2+)</name>
        <dbReference type="ChEBI" id="CHEBI:29105"/>
        <label>2</label>
    </ligand>
</feature>
<feature type="binding site" evidence="3">
    <location>
        <position position="160"/>
    </location>
    <ligand>
        <name>Zn(2+)</name>
        <dbReference type="ChEBI" id="CHEBI:29105"/>
        <label>3</label>
    </ligand>
</feature>
<feature type="binding site" evidence="3">
    <location>
        <position position="163"/>
    </location>
    <ligand>
        <name>Zn(2+)</name>
        <dbReference type="ChEBI" id="CHEBI:29105"/>
        <label>3</label>
    </ligand>
</feature>
<feature type="binding site" evidence="3">
    <location>
        <position position="186"/>
    </location>
    <ligand>
        <name>Zn(2+)</name>
        <dbReference type="ChEBI" id="CHEBI:29105"/>
        <label>3</label>
    </ligand>
</feature>
<feature type="binding site" evidence="3">
    <location>
        <position position="190"/>
    </location>
    <ligand>
        <name>Zn(2+)</name>
        <dbReference type="ChEBI" id="CHEBI:29105"/>
        <label>3</label>
    </ligand>
</feature>
<feature type="binding site" evidence="1">
    <location>
        <position position="456"/>
    </location>
    <ligand>
        <name>ATP</name>
        <dbReference type="ChEBI" id="CHEBI:30616"/>
    </ligand>
</feature>
<feature type="binding site" evidence="2">
    <location>
        <begin position="473"/>
        <end position="480"/>
    </location>
    <ligand>
        <name>ATP</name>
        <dbReference type="ChEBI" id="CHEBI:30616"/>
    </ligand>
</feature>
<feature type="binding site" evidence="1">
    <location>
        <position position="646"/>
    </location>
    <ligand>
        <name>ATP</name>
        <dbReference type="ChEBI" id="CHEBI:30616"/>
    </ligand>
</feature>
<feature type="binding site" evidence="1">
    <location>
        <position position="683"/>
    </location>
    <ligand>
        <name>ATP</name>
        <dbReference type="ChEBI" id="CHEBI:30616"/>
    </ligand>
</feature>
<feature type="binding site" evidence="1">
    <location>
        <position position="813"/>
    </location>
    <ligand>
        <name>ATP</name>
        <dbReference type="ChEBI" id="CHEBI:30616"/>
    </ligand>
</feature>
<proteinExistence type="evidence at protein level"/>
<keyword id="KW-0067">ATP-binding</keyword>
<keyword id="KW-0963">Cytoplasm</keyword>
<keyword id="KW-0347">Helicase</keyword>
<keyword id="KW-0378">Hydrolase</keyword>
<keyword id="KW-0479">Metal-binding</keyword>
<keyword id="KW-0547">Nucleotide-binding</keyword>
<keyword id="KW-0597">Phosphoprotein</keyword>
<keyword id="KW-1185">Reference proteome</keyword>
<keyword id="KW-0862">Zinc</keyword>
<keyword id="KW-0863">Zinc-finger</keyword>
<protein>
    <recommendedName>
        <fullName>Regulator of nonsense transcripts 1 homolog</fullName>
        <ecNumber evidence="1">3.6.4.12</ecNumber>
        <ecNumber evidence="1">3.6.4.13</ecNumber>
    </recommendedName>
</protein>
<comment type="function">
    <text evidence="1 5 6">RNA-dependent helicase and ATPase required for nonsense-mediated decay (NMD) of mRNAs containing premature stop codons. Is recruited to mRNAs upon translation termination and undergoes a cycle of phosphorylation and dephosphorylation; its phosphorylation appears to be a key step in NMD. The formation of an Upf1-Upf2-Upf3 surveillance complex is believed to activate NMD (By similarity).</text>
</comment>
<comment type="catalytic activity">
    <reaction evidence="1">
        <text>ATP + H2O = ADP + phosphate + H(+)</text>
        <dbReference type="Rhea" id="RHEA:13065"/>
        <dbReference type="ChEBI" id="CHEBI:15377"/>
        <dbReference type="ChEBI" id="CHEBI:15378"/>
        <dbReference type="ChEBI" id="CHEBI:30616"/>
        <dbReference type="ChEBI" id="CHEBI:43474"/>
        <dbReference type="ChEBI" id="CHEBI:456216"/>
        <dbReference type="EC" id="3.6.4.12"/>
    </reaction>
    <physiologicalReaction direction="left-to-right" evidence="1">
        <dbReference type="Rhea" id="RHEA:13066"/>
    </physiologicalReaction>
</comment>
<comment type="catalytic activity">
    <reaction evidence="1">
        <text>ATP + H2O = ADP + phosphate + H(+)</text>
        <dbReference type="Rhea" id="RHEA:13065"/>
        <dbReference type="ChEBI" id="CHEBI:15377"/>
        <dbReference type="ChEBI" id="CHEBI:15378"/>
        <dbReference type="ChEBI" id="CHEBI:30616"/>
        <dbReference type="ChEBI" id="CHEBI:43474"/>
        <dbReference type="ChEBI" id="CHEBI:456216"/>
        <dbReference type="EC" id="3.6.4.13"/>
    </reaction>
    <physiologicalReaction direction="left-to-right" evidence="1">
        <dbReference type="Rhea" id="RHEA:13066"/>
    </physiologicalReaction>
</comment>
<comment type="subcellular location">
    <subcellularLocation>
        <location evidence="7">Cytoplasm</location>
    </subcellularLocation>
    <subcellularLocation>
        <location evidence="7">Cytoplasm</location>
        <location evidence="7">Cytoplasmic ribonucleoprotein granule</location>
    </subcellularLocation>
</comment>
<comment type="PTM">
    <text evidence="9 10">Phosphorylated, probably by nonC.</text>
</comment>
<comment type="miscellaneous">
    <text>In Drosophila, the definition of premature stop codons in mRNAs appears to be independent of exon boundaries and of the EJC complex.</text>
</comment>
<comment type="similarity">
    <text evidence="8">Belongs to the DNA2/NAM7 helicase family.</text>
</comment>
<reference key="1">
    <citation type="journal article" date="2000" name="Science">
        <title>The genome sequence of Drosophila melanogaster.</title>
        <authorList>
            <person name="Adams M.D."/>
            <person name="Celniker S.E."/>
            <person name="Holt R.A."/>
            <person name="Evans C.A."/>
            <person name="Gocayne J.D."/>
            <person name="Amanatides P.G."/>
            <person name="Scherer S.E."/>
            <person name="Li P.W."/>
            <person name="Hoskins R.A."/>
            <person name="Galle R.F."/>
            <person name="George R.A."/>
            <person name="Lewis S.E."/>
            <person name="Richards S."/>
            <person name="Ashburner M."/>
            <person name="Henderson S.N."/>
            <person name="Sutton G.G."/>
            <person name="Wortman J.R."/>
            <person name="Yandell M.D."/>
            <person name="Zhang Q."/>
            <person name="Chen L.X."/>
            <person name="Brandon R.C."/>
            <person name="Rogers Y.-H.C."/>
            <person name="Blazej R.G."/>
            <person name="Champe M."/>
            <person name="Pfeiffer B.D."/>
            <person name="Wan K.H."/>
            <person name="Doyle C."/>
            <person name="Baxter E.G."/>
            <person name="Helt G."/>
            <person name="Nelson C.R."/>
            <person name="Miklos G.L.G."/>
            <person name="Abril J.F."/>
            <person name="Agbayani A."/>
            <person name="An H.-J."/>
            <person name="Andrews-Pfannkoch C."/>
            <person name="Baldwin D."/>
            <person name="Ballew R.M."/>
            <person name="Basu A."/>
            <person name="Baxendale J."/>
            <person name="Bayraktaroglu L."/>
            <person name="Beasley E.M."/>
            <person name="Beeson K.Y."/>
            <person name="Benos P.V."/>
            <person name="Berman B.P."/>
            <person name="Bhandari D."/>
            <person name="Bolshakov S."/>
            <person name="Borkova D."/>
            <person name="Botchan M.R."/>
            <person name="Bouck J."/>
            <person name="Brokstein P."/>
            <person name="Brottier P."/>
            <person name="Burtis K.C."/>
            <person name="Busam D.A."/>
            <person name="Butler H."/>
            <person name="Cadieu E."/>
            <person name="Center A."/>
            <person name="Chandra I."/>
            <person name="Cherry J.M."/>
            <person name="Cawley S."/>
            <person name="Dahlke C."/>
            <person name="Davenport L.B."/>
            <person name="Davies P."/>
            <person name="de Pablos B."/>
            <person name="Delcher A."/>
            <person name="Deng Z."/>
            <person name="Mays A.D."/>
            <person name="Dew I."/>
            <person name="Dietz S.M."/>
            <person name="Dodson K."/>
            <person name="Doup L.E."/>
            <person name="Downes M."/>
            <person name="Dugan-Rocha S."/>
            <person name="Dunkov B.C."/>
            <person name="Dunn P."/>
            <person name="Durbin K.J."/>
            <person name="Evangelista C.C."/>
            <person name="Ferraz C."/>
            <person name="Ferriera S."/>
            <person name="Fleischmann W."/>
            <person name="Fosler C."/>
            <person name="Gabrielian A.E."/>
            <person name="Garg N.S."/>
            <person name="Gelbart W.M."/>
            <person name="Glasser K."/>
            <person name="Glodek A."/>
            <person name="Gong F."/>
            <person name="Gorrell J.H."/>
            <person name="Gu Z."/>
            <person name="Guan P."/>
            <person name="Harris M."/>
            <person name="Harris N.L."/>
            <person name="Harvey D.A."/>
            <person name="Heiman T.J."/>
            <person name="Hernandez J.R."/>
            <person name="Houck J."/>
            <person name="Hostin D."/>
            <person name="Houston K.A."/>
            <person name="Howland T.J."/>
            <person name="Wei M.-H."/>
            <person name="Ibegwam C."/>
            <person name="Jalali M."/>
            <person name="Kalush F."/>
            <person name="Karpen G.H."/>
            <person name="Ke Z."/>
            <person name="Kennison J.A."/>
            <person name="Ketchum K.A."/>
            <person name="Kimmel B.E."/>
            <person name="Kodira C.D."/>
            <person name="Kraft C.L."/>
            <person name="Kravitz S."/>
            <person name="Kulp D."/>
            <person name="Lai Z."/>
            <person name="Lasko P."/>
            <person name="Lei Y."/>
            <person name="Levitsky A.A."/>
            <person name="Li J.H."/>
            <person name="Li Z."/>
            <person name="Liang Y."/>
            <person name="Lin X."/>
            <person name="Liu X."/>
            <person name="Mattei B."/>
            <person name="McIntosh T.C."/>
            <person name="McLeod M.P."/>
            <person name="McPherson D."/>
            <person name="Merkulov G."/>
            <person name="Milshina N.V."/>
            <person name="Mobarry C."/>
            <person name="Morris J."/>
            <person name="Moshrefi A."/>
            <person name="Mount S.M."/>
            <person name="Moy M."/>
            <person name="Murphy B."/>
            <person name="Murphy L."/>
            <person name="Muzny D.M."/>
            <person name="Nelson D.L."/>
            <person name="Nelson D.R."/>
            <person name="Nelson K.A."/>
            <person name="Nixon K."/>
            <person name="Nusskern D.R."/>
            <person name="Pacleb J.M."/>
            <person name="Palazzolo M."/>
            <person name="Pittman G.S."/>
            <person name="Pan S."/>
            <person name="Pollard J."/>
            <person name="Puri V."/>
            <person name="Reese M.G."/>
            <person name="Reinert K."/>
            <person name="Remington K."/>
            <person name="Saunders R.D.C."/>
            <person name="Scheeler F."/>
            <person name="Shen H."/>
            <person name="Shue B.C."/>
            <person name="Siden-Kiamos I."/>
            <person name="Simpson M."/>
            <person name="Skupski M.P."/>
            <person name="Smith T.J."/>
            <person name="Spier E."/>
            <person name="Spradling A.C."/>
            <person name="Stapleton M."/>
            <person name="Strong R."/>
            <person name="Sun E."/>
            <person name="Svirskas R."/>
            <person name="Tector C."/>
            <person name="Turner R."/>
            <person name="Venter E."/>
            <person name="Wang A.H."/>
            <person name="Wang X."/>
            <person name="Wang Z.-Y."/>
            <person name="Wassarman D.A."/>
            <person name="Weinstock G.M."/>
            <person name="Weissenbach J."/>
            <person name="Williams S.M."/>
            <person name="Woodage T."/>
            <person name="Worley K.C."/>
            <person name="Wu D."/>
            <person name="Yang S."/>
            <person name="Yao Q.A."/>
            <person name="Ye J."/>
            <person name="Yeh R.-F."/>
            <person name="Zaveri J.S."/>
            <person name="Zhan M."/>
            <person name="Zhang G."/>
            <person name="Zhao Q."/>
            <person name="Zheng L."/>
            <person name="Zheng X.H."/>
            <person name="Zhong F.N."/>
            <person name="Zhong W."/>
            <person name="Zhou X."/>
            <person name="Zhu S.C."/>
            <person name="Zhu X."/>
            <person name="Smith H.O."/>
            <person name="Gibbs R.A."/>
            <person name="Myers E.W."/>
            <person name="Rubin G.M."/>
            <person name="Venter J.C."/>
        </authorList>
    </citation>
    <scope>NUCLEOTIDE SEQUENCE [LARGE SCALE GENOMIC DNA]</scope>
    <source>
        <strain>Berkeley</strain>
    </source>
</reference>
<reference key="2">
    <citation type="journal article" date="2002" name="Genome Biol.">
        <title>Annotation of the Drosophila melanogaster euchromatic genome: a systematic review.</title>
        <authorList>
            <person name="Misra S."/>
            <person name="Crosby M.A."/>
            <person name="Mungall C.J."/>
            <person name="Matthews B.B."/>
            <person name="Campbell K.S."/>
            <person name="Hradecky P."/>
            <person name="Huang Y."/>
            <person name="Kaminker J.S."/>
            <person name="Millburn G.H."/>
            <person name="Prochnik S.E."/>
            <person name="Smith C.D."/>
            <person name="Tupy J.L."/>
            <person name="Whitfield E.J."/>
            <person name="Bayraktaroglu L."/>
            <person name="Berman B.P."/>
            <person name="Bettencourt B.R."/>
            <person name="Celniker S.E."/>
            <person name="de Grey A.D.N.J."/>
            <person name="Drysdale R.A."/>
            <person name="Harris N.L."/>
            <person name="Richter J."/>
            <person name="Russo S."/>
            <person name="Schroeder A.J."/>
            <person name="Shu S.Q."/>
            <person name="Stapleton M."/>
            <person name="Yamada C."/>
            <person name="Ashburner M."/>
            <person name="Gelbart W.M."/>
            <person name="Rubin G.M."/>
            <person name="Lewis S.E."/>
        </authorList>
    </citation>
    <scope>GENOME REANNOTATION</scope>
    <source>
        <strain>Berkeley</strain>
    </source>
</reference>
<reference key="3">
    <citation type="journal article" date="2002" name="Genome Biol.">
        <title>A Drosophila full-length cDNA resource.</title>
        <authorList>
            <person name="Stapleton M."/>
            <person name="Carlson J.W."/>
            <person name="Brokstein P."/>
            <person name="Yu C."/>
            <person name="Champe M."/>
            <person name="George R.A."/>
            <person name="Guarin H."/>
            <person name="Kronmiller B."/>
            <person name="Pacleb J.M."/>
            <person name="Park S."/>
            <person name="Wan K.H."/>
            <person name="Rubin G.M."/>
            <person name="Celniker S.E."/>
        </authorList>
    </citation>
    <scope>NUCLEOTIDE SEQUENCE [LARGE SCALE MRNA]</scope>
    <source>
        <strain>Berkeley</strain>
        <tissue>Embryo</tissue>
    </source>
</reference>
<reference key="4">
    <citation type="journal article" date="2003" name="EMBO J.">
        <title>Nonsense-mediated mRNA decay in Drosophila: at the intersection of the yeast and mammalian pathways.</title>
        <authorList>
            <person name="Gatfield D."/>
            <person name="Ciccarelli F.D."/>
            <person name="Bork P."/>
            <person name="Izaurralde E."/>
        </authorList>
    </citation>
    <scope>FUNCTION</scope>
    <scope>PHOSPHORYLATION</scope>
</reference>
<reference key="5">
    <citation type="journal article" date="2005" name="RNA">
        <title>Nonsense-mediated mRNA decay factors act in concert to regulate common mRNA targets.</title>
        <authorList>
            <person name="Rehwinkel J."/>
            <person name="Letunic I."/>
            <person name="Raes J."/>
            <person name="Bork P."/>
            <person name="Izaurralde E."/>
        </authorList>
    </citation>
    <scope>FUNCTION</scope>
    <scope>PHOSPHORYLATION</scope>
</reference>
<reference key="6">
    <citation type="journal article" date="2006" name="Neuron">
        <title>Staufen- and FMRP-containing neuronal RNPs are structurally and functionally related to somatic P bodies.</title>
        <authorList>
            <person name="Barbee S.A."/>
            <person name="Estes P.S."/>
            <person name="Cziko A.M."/>
            <person name="Hillebrand J."/>
            <person name="Luedeman R.A."/>
            <person name="Coller J.M."/>
            <person name="Johnson N."/>
            <person name="Howlett I.C."/>
            <person name="Geng C."/>
            <person name="Ueda R."/>
            <person name="Brand A.H."/>
            <person name="Newbury S.F."/>
            <person name="Wilhelm J.E."/>
            <person name="Levine R.B."/>
            <person name="Nakamura A."/>
            <person name="Parker R."/>
            <person name="Ramaswami M."/>
        </authorList>
    </citation>
    <scope>SUBCELLULAR LOCATION</scope>
</reference>
<name>RENT1_DROME</name>